<gene>
    <name evidence="1" type="primary">rimP</name>
    <name type="ordered locus">Dtpsy_1245</name>
</gene>
<organism>
    <name type="scientific">Acidovorax ebreus (strain TPSY)</name>
    <name type="common">Diaphorobacter sp. (strain TPSY)</name>
    <dbReference type="NCBI Taxonomy" id="535289"/>
    <lineage>
        <taxon>Bacteria</taxon>
        <taxon>Pseudomonadati</taxon>
        <taxon>Pseudomonadota</taxon>
        <taxon>Betaproteobacteria</taxon>
        <taxon>Burkholderiales</taxon>
        <taxon>Comamonadaceae</taxon>
        <taxon>Diaphorobacter</taxon>
    </lineage>
</organism>
<proteinExistence type="inferred from homology"/>
<keyword id="KW-0963">Cytoplasm</keyword>
<keyword id="KW-1185">Reference proteome</keyword>
<keyword id="KW-0690">Ribosome biogenesis</keyword>
<dbReference type="EMBL" id="CP001392">
    <property type="protein sequence ID" value="ACM32712.1"/>
    <property type="molecule type" value="Genomic_DNA"/>
</dbReference>
<dbReference type="RefSeq" id="WP_015912880.1">
    <property type="nucleotide sequence ID" value="NC_011992.1"/>
</dbReference>
<dbReference type="SMR" id="B9MGN9"/>
<dbReference type="KEGG" id="dia:Dtpsy_1245"/>
<dbReference type="eggNOG" id="COG0779">
    <property type="taxonomic scope" value="Bacteria"/>
</dbReference>
<dbReference type="HOGENOM" id="CLU_070525_1_0_4"/>
<dbReference type="Proteomes" id="UP000000450">
    <property type="component" value="Chromosome"/>
</dbReference>
<dbReference type="GO" id="GO:0005829">
    <property type="term" value="C:cytosol"/>
    <property type="evidence" value="ECO:0007669"/>
    <property type="project" value="TreeGrafter"/>
</dbReference>
<dbReference type="GO" id="GO:0000028">
    <property type="term" value="P:ribosomal small subunit assembly"/>
    <property type="evidence" value="ECO:0007669"/>
    <property type="project" value="TreeGrafter"/>
</dbReference>
<dbReference type="GO" id="GO:0006412">
    <property type="term" value="P:translation"/>
    <property type="evidence" value="ECO:0007669"/>
    <property type="project" value="TreeGrafter"/>
</dbReference>
<dbReference type="CDD" id="cd01734">
    <property type="entry name" value="YlxS_C"/>
    <property type="match status" value="1"/>
</dbReference>
<dbReference type="Gene3D" id="3.30.300.70">
    <property type="entry name" value="RimP-like superfamily, N-terminal"/>
    <property type="match status" value="1"/>
</dbReference>
<dbReference type="HAMAP" id="MF_01077">
    <property type="entry name" value="RimP"/>
    <property type="match status" value="1"/>
</dbReference>
<dbReference type="InterPro" id="IPR003728">
    <property type="entry name" value="Ribosome_maturation_RimP"/>
</dbReference>
<dbReference type="InterPro" id="IPR028998">
    <property type="entry name" value="RimP_C"/>
</dbReference>
<dbReference type="InterPro" id="IPR036847">
    <property type="entry name" value="RimP_C_sf"/>
</dbReference>
<dbReference type="InterPro" id="IPR028989">
    <property type="entry name" value="RimP_N"/>
</dbReference>
<dbReference type="InterPro" id="IPR035956">
    <property type="entry name" value="RimP_N_sf"/>
</dbReference>
<dbReference type="NCBIfam" id="NF000929">
    <property type="entry name" value="PRK00092.2-1"/>
    <property type="match status" value="1"/>
</dbReference>
<dbReference type="NCBIfam" id="NF011235">
    <property type="entry name" value="PRK14642.1"/>
    <property type="match status" value="1"/>
</dbReference>
<dbReference type="PANTHER" id="PTHR33867">
    <property type="entry name" value="RIBOSOME MATURATION FACTOR RIMP"/>
    <property type="match status" value="1"/>
</dbReference>
<dbReference type="PANTHER" id="PTHR33867:SF1">
    <property type="entry name" value="RIBOSOME MATURATION FACTOR RIMP"/>
    <property type="match status" value="1"/>
</dbReference>
<dbReference type="Pfam" id="PF02576">
    <property type="entry name" value="RimP_N"/>
    <property type="match status" value="1"/>
</dbReference>
<dbReference type="SUPFAM" id="SSF74942">
    <property type="entry name" value="YhbC-like, C-terminal domain"/>
    <property type="match status" value="1"/>
</dbReference>
<dbReference type="SUPFAM" id="SSF75420">
    <property type="entry name" value="YhbC-like, N-terminal domain"/>
    <property type="match status" value="1"/>
</dbReference>
<evidence type="ECO:0000255" key="1">
    <source>
        <dbReference type="HAMAP-Rule" id="MF_01077"/>
    </source>
</evidence>
<feature type="chain" id="PRO_1000149793" description="Ribosome maturation factor RimP">
    <location>
        <begin position="1"/>
        <end position="197"/>
    </location>
</feature>
<protein>
    <recommendedName>
        <fullName evidence="1">Ribosome maturation factor RimP</fullName>
    </recommendedName>
</protein>
<reference key="1">
    <citation type="submission" date="2009-01" db="EMBL/GenBank/DDBJ databases">
        <title>Complete sequence of Diaphorobacter sp. TPSY.</title>
        <authorList>
            <consortium name="US DOE Joint Genome Institute"/>
            <person name="Lucas S."/>
            <person name="Copeland A."/>
            <person name="Lapidus A."/>
            <person name="Glavina del Rio T."/>
            <person name="Tice H."/>
            <person name="Bruce D."/>
            <person name="Goodwin L."/>
            <person name="Pitluck S."/>
            <person name="Chertkov O."/>
            <person name="Brettin T."/>
            <person name="Detter J.C."/>
            <person name="Han C."/>
            <person name="Larimer F."/>
            <person name="Land M."/>
            <person name="Hauser L."/>
            <person name="Kyrpides N."/>
            <person name="Mikhailova N."/>
            <person name="Coates J.D."/>
        </authorList>
    </citation>
    <scope>NUCLEOTIDE SEQUENCE [LARGE SCALE GENOMIC DNA]</scope>
    <source>
        <strain>TPSY</strain>
    </source>
</reference>
<accession>B9MGN9</accession>
<sequence>MALQQIVEQTVAGLGYDLVEIERSAGGLLRITIDLVWVPPTDEVSAAVGVEQFITVEDCEKVTRQLQFALEVEGVDYTRLEVSSPGIDRLLRNEADFKRFEGEVIDITLKQPMGAAAGGQVHANRKKFRGTLERADSGGWQIVWSDEPPVKPGQRISKKRVPAPLQALGFTLDELREARLAPIVDFKGRGTKPGEPG</sequence>
<comment type="function">
    <text evidence="1">Required for maturation of 30S ribosomal subunits.</text>
</comment>
<comment type="subcellular location">
    <subcellularLocation>
        <location evidence="1">Cytoplasm</location>
    </subcellularLocation>
</comment>
<comment type="similarity">
    <text evidence="1">Belongs to the RimP family.</text>
</comment>
<name>RIMP_ACIET</name>